<name>HBA_CARAU</name>
<evidence type="ECO:0000255" key="1">
    <source>
        <dbReference type="PROSITE-ProRule" id="PRU00238"/>
    </source>
</evidence>
<evidence type="ECO:0000269" key="2">
    <source>
    </source>
</evidence>
<comment type="function">
    <text>Involved in oxygen transport from gills to the various peripheral tissues.</text>
</comment>
<comment type="subunit">
    <text>Heterotetramer of two alpha chains and two beta chains.</text>
</comment>
<comment type="tissue specificity">
    <text>Red blood cells.</text>
</comment>
<comment type="similarity">
    <text evidence="1">Belongs to the globin family.</text>
</comment>
<sequence length="142" mass="15426">SLSDKDKAVVKALWAKIGSRADEIGAEALGRMLTVYPQTKTYFSHWSDLSPGSGPVKKHGKTIMGAVGDAVSKIDDLVGALSALSELHAFKLRIDPANFKILAHNVIVVIGMLFPGDFTPEVHMSVDKFFQNLALALSEKYR</sequence>
<protein>
    <recommendedName>
        <fullName>Hemoglobin subunit alpha</fullName>
    </recommendedName>
    <alternativeName>
        <fullName>Alpha-globin</fullName>
    </alternativeName>
    <alternativeName>
        <fullName>Hemoglobin alpha chain</fullName>
    </alternativeName>
</protein>
<feature type="chain" id="PRO_0000052586" description="Hemoglobin subunit alpha">
    <location>
        <begin position="1"/>
        <end position="142"/>
    </location>
</feature>
<feature type="domain" description="Globin" evidence="1">
    <location>
        <begin position="1"/>
        <end position="142"/>
    </location>
</feature>
<feature type="binding site" evidence="1">
    <location>
        <position position="59"/>
    </location>
    <ligand>
        <name>O2</name>
        <dbReference type="ChEBI" id="CHEBI:15379"/>
    </ligand>
</feature>
<feature type="binding site" description="proximal binding residue" evidence="1">
    <location>
        <position position="88"/>
    </location>
    <ligand>
        <name>heme b</name>
        <dbReference type="ChEBI" id="CHEBI:60344"/>
    </ligand>
    <ligandPart>
        <name>Fe</name>
        <dbReference type="ChEBI" id="CHEBI:18248"/>
    </ligandPart>
</feature>
<feature type="modified residue" description="N-acetylserine" evidence="2">
    <location>
        <position position="1"/>
    </location>
</feature>
<feature type="sequence variant">
    <original>S</original>
    <variation>A</variation>
    <location>
        <position position="47"/>
    </location>
</feature>
<keyword id="KW-0007">Acetylation</keyword>
<keyword id="KW-0903">Direct protein sequencing</keyword>
<keyword id="KW-0349">Heme</keyword>
<keyword id="KW-0408">Iron</keyword>
<keyword id="KW-0479">Metal-binding</keyword>
<keyword id="KW-0561">Oxygen transport</keyword>
<keyword id="KW-1185">Reference proteome</keyword>
<keyword id="KW-0813">Transport</keyword>
<gene>
    <name type="primary">hba</name>
</gene>
<organism>
    <name type="scientific">Carassius auratus</name>
    <name type="common">Goldfish</name>
    <dbReference type="NCBI Taxonomy" id="7957"/>
    <lineage>
        <taxon>Eukaryota</taxon>
        <taxon>Metazoa</taxon>
        <taxon>Chordata</taxon>
        <taxon>Craniata</taxon>
        <taxon>Vertebrata</taxon>
        <taxon>Euteleostomi</taxon>
        <taxon>Actinopterygii</taxon>
        <taxon>Neopterygii</taxon>
        <taxon>Teleostei</taxon>
        <taxon>Ostariophysi</taxon>
        <taxon>Cypriniformes</taxon>
        <taxon>Cyprinidae</taxon>
        <taxon>Cyprininae</taxon>
        <taxon>Carassius</taxon>
    </lineage>
</organism>
<proteinExistence type="evidence at protein level"/>
<reference key="1">
    <citation type="journal article" date="1984" name="Hoppe-Seyler's Z. Physiol. Chem.">
        <title>The primary structure of hemoglobin from goldfish (Carassius auratus).</title>
        <authorList>
            <person name="Rodewald K."/>
            <person name="Braunitzer G."/>
        </authorList>
    </citation>
    <scope>PROTEIN SEQUENCE</scope>
    <scope>ACETYLATION AT SER-1</scope>
</reference>
<dbReference type="PIR" id="A02347">
    <property type="entry name" value="HAGY"/>
</dbReference>
<dbReference type="SMR" id="P02018"/>
<dbReference type="iPTMnet" id="P02018"/>
<dbReference type="Proteomes" id="UP000515129">
    <property type="component" value="Unplaced"/>
</dbReference>
<dbReference type="GO" id="GO:0072562">
    <property type="term" value="C:blood microparticle"/>
    <property type="evidence" value="ECO:0007669"/>
    <property type="project" value="TreeGrafter"/>
</dbReference>
<dbReference type="GO" id="GO:0031838">
    <property type="term" value="C:haptoglobin-hemoglobin complex"/>
    <property type="evidence" value="ECO:0007669"/>
    <property type="project" value="TreeGrafter"/>
</dbReference>
<dbReference type="GO" id="GO:0005833">
    <property type="term" value="C:hemoglobin complex"/>
    <property type="evidence" value="ECO:0007669"/>
    <property type="project" value="InterPro"/>
</dbReference>
<dbReference type="GO" id="GO:0031720">
    <property type="term" value="F:haptoglobin binding"/>
    <property type="evidence" value="ECO:0007669"/>
    <property type="project" value="TreeGrafter"/>
</dbReference>
<dbReference type="GO" id="GO:0020037">
    <property type="term" value="F:heme binding"/>
    <property type="evidence" value="ECO:0007669"/>
    <property type="project" value="InterPro"/>
</dbReference>
<dbReference type="GO" id="GO:0005506">
    <property type="term" value="F:iron ion binding"/>
    <property type="evidence" value="ECO:0007669"/>
    <property type="project" value="InterPro"/>
</dbReference>
<dbReference type="GO" id="GO:0043177">
    <property type="term" value="F:organic acid binding"/>
    <property type="evidence" value="ECO:0007669"/>
    <property type="project" value="TreeGrafter"/>
</dbReference>
<dbReference type="GO" id="GO:0019825">
    <property type="term" value="F:oxygen binding"/>
    <property type="evidence" value="ECO:0007669"/>
    <property type="project" value="InterPro"/>
</dbReference>
<dbReference type="GO" id="GO:0005344">
    <property type="term" value="F:oxygen carrier activity"/>
    <property type="evidence" value="ECO:0007669"/>
    <property type="project" value="UniProtKB-KW"/>
</dbReference>
<dbReference type="GO" id="GO:0004601">
    <property type="term" value="F:peroxidase activity"/>
    <property type="evidence" value="ECO:0007669"/>
    <property type="project" value="TreeGrafter"/>
</dbReference>
<dbReference type="GO" id="GO:0042744">
    <property type="term" value="P:hydrogen peroxide catabolic process"/>
    <property type="evidence" value="ECO:0007669"/>
    <property type="project" value="TreeGrafter"/>
</dbReference>
<dbReference type="CDD" id="cd08927">
    <property type="entry name" value="Hb-alpha-like"/>
    <property type="match status" value="1"/>
</dbReference>
<dbReference type="FunFam" id="1.10.490.10:FF:000002">
    <property type="entry name" value="Hemoglobin subunit alpha"/>
    <property type="match status" value="1"/>
</dbReference>
<dbReference type="Gene3D" id="1.10.490.10">
    <property type="entry name" value="Globins"/>
    <property type="match status" value="1"/>
</dbReference>
<dbReference type="InterPro" id="IPR000971">
    <property type="entry name" value="Globin"/>
</dbReference>
<dbReference type="InterPro" id="IPR009050">
    <property type="entry name" value="Globin-like_sf"/>
</dbReference>
<dbReference type="InterPro" id="IPR012292">
    <property type="entry name" value="Globin/Proto"/>
</dbReference>
<dbReference type="InterPro" id="IPR002338">
    <property type="entry name" value="Hemoglobin_a-typ"/>
</dbReference>
<dbReference type="InterPro" id="IPR050056">
    <property type="entry name" value="Hemoglobin_oxygen_transport"/>
</dbReference>
<dbReference type="InterPro" id="IPR002339">
    <property type="entry name" value="Hemoglobin_pi"/>
</dbReference>
<dbReference type="PANTHER" id="PTHR11442:SF93">
    <property type="entry name" value="ALPHA GLOBIN-LIKE-RELATED"/>
    <property type="match status" value="1"/>
</dbReference>
<dbReference type="PANTHER" id="PTHR11442">
    <property type="entry name" value="HEMOGLOBIN FAMILY MEMBER"/>
    <property type="match status" value="1"/>
</dbReference>
<dbReference type="Pfam" id="PF00042">
    <property type="entry name" value="Globin"/>
    <property type="match status" value="1"/>
</dbReference>
<dbReference type="PRINTS" id="PR00612">
    <property type="entry name" value="ALPHAHAEM"/>
</dbReference>
<dbReference type="PRINTS" id="PR00815">
    <property type="entry name" value="PIHAEM"/>
</dbReference>
<dbReference type="SUPFAM" id="SSF46458">
    <property type="entry name" value="Globin-like"/>
    <property type="match status" value="1"/>
</dbReference>
<dbReference type="PROSITE" id="PS01033">
    <property type="entry name" value="GLOBIN"/>
    <property type="match status" value="1"/>
</dbReference>
<accession>P02018</accession>